<dbReference type="EC" id="2.7.4.3" evidence="1"/>
<dbReference type="EMBL" id="BA000011">
    <property type="protein sequence ID" value="BAB59763.1"/>
    <property type="molecule type" value="Genomic_DNA"/>
</dbReference>
<dbReference type="RefSeq" id="WP_010916880.1">
    <property type="nucleotide sequence ID" value="NC_002689.2"/>
</dbReference>
<dbReference type="SMR" id="Q97B38"/>
<dbReference type="STRING" id="273116.gene:9381409"/>
<dbReference type="PaxDb" id="273116-14324837"/>
<dbReference type="GeneID" id="1441728"/>
<dbReference type="KEGG" id="tvo:TVG0613288"/>
<dbReference type="eggNOG" id="arCOG01038">
    <property type="taxonomic scope" value="Archaea"/>
</dbReference>
<dbReference type="HOGENOM" id="CLU_079096_0_1_2"/>
<dbReference type="OrthoDB" id="8730at2157"/>
<dbReference type="PhylomeDB" id="Q97B38"/>
<dbReference type="Proteomes" id="UP000001017">
    <property type="component" value="Chromosome"/>
</dbReference>
<dbReference type="GO" id="GO:0004017">
    <property type="term" value="F:adenylate kinase activity"/>
    <property type="evidence" value="ECO:0007669"/>
    <property type="project" value="UniProtKB-UniRule"/>
</dbReference>
<dbReference type="GO" id="GO:0005524">
    <property type="term" value="F:ATP binding"/>
    <property type="evidence" value="ECO:0007669"/>
    <property type="project" value="UniProtKB-UniRule"/>
</dbReference>
<dbReference type="GO" id="GO:0016887">
    <property type="term" value="F:ATP hydrolysis activity"/>
    <property type="evidence" value="ECO:0007669"/>
    <property type="project" value="InterPro"/>
</dbReference>
<dbReference type="GO" id="GO:0042274">
    <property type="term" value="P:ribosomal small subunit biogenesis"/>
    <property type="evidence" value="ECO:0007669"/>
    <property type="project" value="UniProtKB-UniRule"/>
</dbReference>
<dbReference type="GO" id="GO:0006364">
    <property type="term" value="P:rRNA processing"/>
    <property type="evidence" value="ECO:0007669"/>
    <property type="project" value="UniProtKB-KW"/>
</dbReference>
<dbReference type="Gene3D" id="3.40.50.300">
    <property type="entry name" value="P-loop containing nucleotide triphosphate hydrolases"/>
    <property type="match status" value="1"/>
</dbReference>
<dbReference type="HAMAP" id="MF_00039">
    <property type="entry name" value="Adenylate_kinase_AK6"/>
    <property type="match status" value="1"/>
</dbReference>
<dbReference type="InterPro" id="IPR020618">
    <property type="entry name" value="Adenyl_kinase_AK6"/>
</dbReference>
<dbReference type="InterPro" id="IPR027417">
    <property type="entry name" value="P-loop_NTPase"/>
</dbReference>
<dbReference type="PANTHER" id="PTHR12595:SF0">
    <property type="entry name" value="ADENYLATE KINASE ISOENZYME 6"/>
    <property type="match status" value="1"/>
</dbReference>
<dbReference type="PANTHER" id="PTHR12595">
    <property type="entry name" value="POS9-ACTIVATING FACTOR FAP7-RELATED"/>
    <property type="match status" value="1"/>
</dbReference>
<dbReference type="Pfam" id="PF13238">
    <property type="entry name" value="AAA_18"/>
    <property type="match status" value="1"/>
</dbReference>
<dbReference type="SUPFAM" id="SSF52540">
    <property type="entry name" value="P-loop containing nucleoside triphosphate hydrolases"/>
    <property type="match status" value="1"/>
</dbReference>
<keyword id="KW-0067">ATP-binding</keyword>
<keyword id="KW-0418">Kinase</keyword>
<keyword id="KW-0547">Nucleotide-binding</keyword>
<keyword id="KW-0690">Ribosome biogenesis</keyword>
<keyword id="KW-0698">rRNA processing</keyword>
<keyword id="KW-0808">Transferase</keyword>
<feature type="chain" id="PRO_0000153918" description="Putative adenylate kinase">
    <location>
        <begin position="1"/>
        <end position="153"/>
    </location>
</feature>
<feature type="region of interest" description="NMP" evidence="1">
    <location>
        <begin position="31"/>
        <end position="47"/>
    </location>
</feature>
<feature type="region of interest" description="LID" evidence="1">
    <location>
        <begin position="94"/>
        <end position="104"/>
    </location>
</feature>
<feature type="binding site" evidence="1">
    <location>
        <position position="12"/>
    </location>
    <ligand>
        <name>ATP</name>
        <dbReference type="ChEBI" id="CHEBI:30616"/>
    </ligand>
</feature>
<feature type="binding site" evidence="1">
    <location>
        <position position="14"/>
    </location>
    <ligand>
        <name>ATP</name>
        <dbReference type="ChEBI" id="CHEBI:30616"/>
    </ligand>
</feature>
<feature type="binding site" evidence="1">
    <location>
        <position position="15"/>
    </location>
    <ligand>
        <name>ATP</name>
        <dbReference type="ChEBI" id="CHEBI:30616"/>
    </ligand>
</feature>
<feature type="binding site" evidence="1">
    <location>
        <position position="16"/>
    </location>
    <ligand>
        <name>ATP</name>
        <dbReference type="ChEBI" id="CHEBI:30616"/>
    </ligand>
</feature>
<feature type="binding site" evidence="1">
    <location>
        <position position="17"/>
    </location>
    <ligand>
        <name>ATP</name>
        <dbReference type="ChEBI" id="CHEBI:30616"/>
    </ligand>
</feature>
<feature type="binding site" evidence="1">
    <location>
        <position position="95"/>
    </location>
    <ligand>
        <name>ATP</name>
        <dbReference type="ChEBI" id="CHEBI:30616"/>
    </ligand>
</feature>
<organism>
    <name type="scientific">Thermoplasma volcanium (strain ATCC 51530 / DSM 4299 / JCM 9571 / NBRC 15438 / GSS1)</name>
    <dbReference type="NCBI Taxonomy" id="273116"/>
    <lineage>
        <taxon>Archaea</taxon>
        <taxon>Methanobacteriati</taxon>
        <taxon>Thermoplasmatota</taxon>
        <taxon>Thermoplasmata</taxon>
        <taxon>Thermoplasmatales</taxon>
        <taxon>Thermoplasmataceae</taxon>
        <taxon>Thermoplasma</taxon>
    </lineage>
</organism>
<accession>Q97B38</accession>
<proteinExistence type="inferred from homology"/>
<reference key="1">
    <citation type="journal article" date="2000" name="Proc. Natl. Acad. Sci. U.S.A.">
        <title>Archaeal adaptation to higher temperatures revealed by genomic sequence of Thermoplasma volcanium.</title>
        <authorList>
            <person name="Kawashima T."/>
            <person name="Amano N."/>
            <person name="Koike H."/>
            <person name="Makino S."/>
            <person name="Higuchi S."/>
            <person name="Kawashima-Ohya Y."/>
            <person name="Watanabe K."/>
            <person name="Yamazaki M."/>
            <person name="Kanehori K."/>
            <person name="Kawamoto T."/>
            <person name="Nunoshiba T."/>
            <person name="Yamamoto Y."/>
            <person name="Aramaki H."/>
            <person name="Makino K."/>
            <person name="Suzuki M."/>
        </authorList>
    </citation>
    <scope>NUCLEOTIDE SEQUENCE [LARGE SCALE GENOMIC DNA]</scope>
    <source>
        <strain>ATCC 51530 / DSM 4299 / JCM 9571 / NBRC 15438 / GSS1</strain>
    </source>
</reference>
<gene>
    <name type="ordered locus">TV0621</name>
    <name type="ORF">TVG0613288</name>
</gene>
<evidence type="ECO:0000255" key="1">
    <source>
        <dbReference type="HAMAP-Rule" id="MF_00039"/>
    </source>
</evidence>
<protein>
    <recommendedName>
        <fullName evidence="1">Putative adenylate kinase</fullName>
        <shortName evidence="1">AK</shortName>
        <ecNumber evidence="1">2.7.4.3</ecNumber>
    </recommendedName>
    <alternativeName>
        <fullName evidence="1">ATP-AMP transphosphorylase</fullName>
    </alternativeName>
</protein>
<name>KAD6_THEVO</name>
<sequence>MGKIACITGPPGAGKSTVCSKLREYGYNCKEGNELAKEYGCLFDEEVDVECLEEKLAEDRFDGIICSHYSHLLGCSTVFILEADLNDLIDRMRARGYSEEKIQENIETQMSSIFYYESLERLPANRIFTLYNGNIDETAKRIISIIERSRNNK</sequence>
<comment type="function">
    <text evidence="1">Broad-specificity nucleoside monophosphate (NMP) kinase that catalyzes the reversible transfer of the terminal phosphate group between nucleoside triphosphates and monophosphates. Also has ATPase activity. Involved in the late maturation steps of the 30S ribosomal particles, specifically 16S rRNA maturation. While NMP activity is not required for ribosome maturation, ATPase activity is. Associates transiently with small ribosomal subunit protein uS11. ATP hydrolysis breaks the interaction with uS11. May temporarily remove uS11 from the ribosome to enable a conformational change of the ribosomal RNA that is needed for the final maturation step of the small ribosomal subunit.</text>
</comment>
<comment type="catalytic activity">
    <reaction evidence="1">
        <text>AMP + ATP = 2 ADP</text>
        <dbReference type="Rhea" id="RHEA:12973"/>
        <dbReference type="ChEBI" id="CHEBI:30616"/>
        <dbReference type="ChEBI" id="CHEBI:456215"/>
        <dbReference type="ChEBI" id="CHEBI:456216"/>
        <dbReference type="EC" id="2.7.4.3"/>
    </reaction>
</comment>
<comment type="catalytic activity">
    <reaction evidence="1">
        <text>ATP + H2O = ADP + phosphate + H(+)</text>
        <dbReference type="Rhea" id="RHEA:13065"/>
        <dbReference type="ChEBI" id="CHEBI:15377"/>
        <dbReference type="ChEBI" id="CHEBI:15378"/>
        <dbReference type="ChEBI" id="CHEBI:30616"/>
        <dbReference type="ChEBI" id="CHEBI:43474"/>
        <dbReference type="ChEBI" id="CHEBI:456216"/>
    </reaction>
</comment>
<comment type="subunit">
    <text evidence="1">Interacts with uS11. Not a structural component of 40S pre-ribosomes, but transiently interacts with them by binding to uS11.</text>
</comment>
<comment type="similarity">
    <text evidence="1">Belongs to the adenylate kinase family. AK6 subfamily.</text>
</comment>